<keyword id="KW-0249">Electron transport</keyword>
<keyword id="KW-0349">Heme</keyword>
<keyword id="KW-0408">Iron</keyword>
<keyword id="KW-0472">Membrane</keyword>
<keyword id="KW-0479">Metal-binding</keyword>
<keyword id="KW-0496">Mitochondrion</keyword>
<keyword id="KW-0999">Mitochondrion inner membrane</keyword>
<keyword id="KW-0679">Respiratory chain</keyword>
<keyword id="KW-0812">Transmembrane</keyword>
<keyword id="KW-1133">Transmembrane helix</keyword>
<keyword id="KW-0813">Transport</keyword>
<keyword id="KW-0830">Ubiquinone</keyword>
<sequence>MTNIRKTHPLLKIVNSSFVDLPAPSSLSSWWNFGSLLGVCLAVQILTGLFLAMHYTSDTATAFNSVTHICRDVNYGWVLRYLHANGASMFFICLYLHVGRGLYYGSYTYSETWNIGILLLFAVMATAFMGYVLPWGQMSFWGATVITNLLSAIPYIGTDLVQWIWGGFSVDKATLTRFFAFHFLFPFIVAALVMVHLLFLHETGSNNPTGIPSDSDMIPFHPYYTIKDILGFLIMLTALSALVLFSPDLLGDPDNYMPANPLNTPPHIKPEWYFLFAYAILRSIPNKLGGVLALVLSILILAIVPMLHTSKQRSMMFRPLSQCLFWFLVAILFTLTWIGGQPVEYPYIIIGQMASVLYFLTILVFMPLVSIMENYLLKW</sequence>
<dbReference type="EMBL" id="AF382830">
    <property type="protein sequence ID" value="AAL32304.1"/>
    <property type="molecule type" value="Genomic_DNA"/>
</dbReference>
<dbReference type="EMBL" id="AF382831">
    <property type="protein sequence ID" value="AAL32305.1"/>
    <property type="molecule type" value="Genomic_DNA"/>
</dbReference>
<dbReference type="EMBL" id="AF382832">
    <property type="protein sequence ID" value="AAL32306.1"/>
    <property type="molecule type" value="Genomic_DNA"/>
</dbReference>
<dbReference type="EMBL" id="AF382833">
    <property type="protein sequence ID" value="AAL32307.1"/>
    <property type="molecule type" value="Genomic_DNA"/>
</dbReference>
<dbReference type="EMBL" id="AF382834">
    <property type="protein sequence ID" value="AAL32308.1"/>
    <property type="molecule type" value="Genomic_DNA"/>
</dbReference>
<dbReference type="EMBL" id="AF382835">
    <property type="protein sequence ID" value="AAL32309.1"/>
    <property type="molecule type" value="Genomic_DNA"/>
</dbReference>
<dbReference type="EMBL" id="AF382836">
    <property type="protein sequence ID" value="AAL32310.1"/>
    <property type="molecule type" value="Genomic_DNA"/>
</dbReference>
<dbReference type="EMBL" id="AF382837">
    <property type="protein sequence ID" value="AAL32311.1"/>
    <property type="molecule type" value="Genomic_DNA"/>
</dbReference>
<dbReference type="EMBL" id="AF382838">
    <property type="protein sequence ID" value="AAL32312.1"/>
    <property type="molecule type" value="Genomic_DNA"/>
</dbReference>
<dbReference type="EMBL" id="AF382839">
    <property type="protein sequence ID" value="AAL32313.1"/>
    <property type="molecule type" value="Genomic_DNA"/>
</dbReference>
<dbReference type="EMBL" id="AF382840">
    <property type="protein sequence ID" value="AAL32314.1"/>
    <property type="molecule type" value="Genomic_DNA"/>
</dbReference>
<dbReference type="EMBL" id="AF382841">
    <property type="protein sequence ID" value="AAL32315.1"/>
    <property type="molecule type" value="Genomic_DNA"/>
</dbReference>
<dbReference type="EMBL" id="AF382842">
    <property type="protein sequence ID" value="AAL32316.1"/>
    <property type="molecule type" value="Genomic_DNA"/>
</dbReference>
<dbReference type="EMBL" id="AF382843">
    <property type="protein sequence ID" value="AAL32317.1"/>
    <property type="molecule type" value="Genomic_DNA"/>
</dbReference>
<dbReference type="EMBL" id="AF382844">
    <property type="protein sequence ID" value="AAL32318.1"/>
    <property type="molecule type" value="Genomic_DNA"/>
</dbReference>
<dbReference type="EMBL" id="AF382845">
    <property type="protein sequence ID" value="AAL32319.1"/>
    <property type="molecule type" value="Genomic_DNA"/>
</dbReference>
<dbReference type="EMBL" id="AF382846">
    <property type="protein sequence ID" value="AAL32320.1"/>
    <property type="molecule type" value="Genomic_DNA"/>
</dbReference>
<dbReference type="EMBL" id="AF382847">
    <property type="protein sequence ID" value="AAL32321.1"/>
    <property type="molecule type" value="Genomic_DNA"/>
</dbReference>
<dbReference type="EMBL" id="AF382848">
    <property type="protein sequence ID" value="AAL32322.1"/>
    <property type="molecule type" value="Genomic_DNA"/>
</dbReference>
<dbReference type="EMBL" id="AF382849">
    <property type="protein sequence ID" value="AAL32323.1"/>
    <property type="molecule type" value="Genomic_DNA"/>
</dbReference>
<dbReference type="EMBL" id="AF382850">
    <property type="protein sequence ID" value="AAL32324.1"/>
    <property type="molecule type" value="Genomic_DNA"/>
</dbReference>
<dbReference type="EMBL" id="AF382851">
    <property type="protein sequence ID" value="AAL32325.1"/>
    <property type="molecule type" value="Genomic_DNA"/>
</dbReference>
<dbReference type="EMBL" id="AF382852">
    <property type="protein sequence ID" value="AAL32326.1"/>
    <property type="molecule type" value="Genomic_DNA"/>
</dbReference>
<dbReference type="EMBL" id="AF382853">
    <property type="protein sequence ID" value="AAL32327.1"/>
    <property type="molecule type" value="Genomic_DNA"/>
</dbReference>
<dbReference type="EMBL" id="AF382854">
    <property type="protein sequence ID" value="AAL32328.1"/>
    <property type="molecule type" value="Genomic_DNA"/>
</dbReference>
<dbReference type="EMBL" id="AF382855">
    <property type="protein sequence ID" value="AAL32329.1"/>
    <property type="molecule type" value="Genomic_DNA"/>
</dbReference>
<dbReference type="EMBL" id="AF382856">
    <property type="protein sequence ID" value="AAL32330.1"/>
    <property type="molecule type" value="Genomic_DNA"/>
</dbReference>
<dbReference type="EMBL" id="AF382857">
    <property type="protein sequence ID" value="AAL32331.1"/>
    <property type="molecule type" value="Genomic_DNA"/>
</dbReference>
<dbReference type="EMBL" id="AF382858">
    <property type="protein sequence ID" value="AAL32332.1"/>
    <property type="molecule type" value="Genomic_DNA"/>
</dbReference>
<dbReference type="EMBL" id="AF382859">
    <property type="protein sequence ID" value="AAL32333.1"/>
    <property type="molecule type" value="Genomic_DNA"/>
</dbReference>
<dbReference type="EMBL" id="AF382860">
    <property type="protein sequence ID" value="AAL32334.1"/>
    <property type="molecule type" value="Genomic_DNA"/>
</dbReference>
<dbReference type="EMBL" id="AF382861">
    <property type="protein sequence ID" value="AAL32335.1"/>
    <property type="molecule type" value="Genomic_DNA"/>
</dbReference>
<dbReference type="EMBL" id="AF382862">
    <property type="protein sequence ID" value="AAL32336.1"/>
    <property type="molecule type" value="Genomic_DNA"/>
</dbReference>
<dbReference type="EMBL" id="AF382863">
    <property type="protein sequence ID" value="AAL32337.1"/>
    <property type="molecule type" value="Genomic_DNA"/>
</dbReference>
<dbReference type="EMBL" id="AF382864">
    <property type="protein sequence ID" value="AAL32338.1"/>
    <property type="molecule type" value="Genomic_DNA"/>
</dbReference>
<dbReference type="EMBL" id="AF382865">
    <property type="protein sequence ID" value="AAL32339.1"/>
    <property type="molecule type" value="Genomic_DNA"/>
</dbReference>
<dbReference type="EMBL" id="AF382866">
    <property type="protein sequence ID" value="AAL32340.1"/>
    <property type="molecule type" value="Genomic_DNA"/>
</dbReference>
<dbReference type="EMBL" id="AF382867">
    <property type="protein sequence ID" value="AAL32341.1"/>
    <property type="molecule type" value="Genomic_DNA"/>
</dbReference>
<dbReference type="EMBL" id="L19721">
    <property type="protein sequence ID" value="AAA17767.1"/>
    <property type="molecule type" value="Genomic_DNA"/>
</dbReference>
<dbReference type="SMR" id="Q33487"/>
<dbReference type="GO" id="GO:0005743">
    <property type="term" value="C:mitochondrial inner membrane"/>
    <property type="evidence" value="ECO:0007669"/>
    <property type="project" value="UniProtKB-SubCell"/>
</dbReference>
<dbReference type="GO" id="GO:0045275">
    <property type="term" value="C:respiratory chain complex III"/>
    <property type="evidence" value="ECO:0007669"/>
    <property type="project" value="InterPro"/>
</dbReference>
<dbReference type="GO" id="GO:0046872">
    <property type="term" value="F:metal ion binding"/>
    <property type="evidence" value="ECO:0007669"/>
    <property type="project" value="UniProtKB-KW"/>
</dbReference>
<dbReference type="GO" id="GO:0008121">
    <property type="term" value="F:ubiquinol-cytochrome-c reductase activity"/>
    <property type="evidence" value="ECO:0007669"/>
    <property type="project" value="InterPro"/>
</dbReference>
<dbReference type="GO" id="GO:0006122">
    <property type="term" value="P:mitochondrial electron transport, ubiquinol to cytochrome c"/>
    <property type="evidence" value="ECO:0007669"/>
    <property type="project" value="TreeGrafter"/>
</dbReference>
<dbReference type="CDD" id="cd00290">
    <property type="entry name" value="cytochrome_b_C"/>
    <property type="match status" value="1"/>
</dbReference>
<dbReference type="CDD" id="cd00284">
    <property type="entry name" value="Cytochrome_b_N"/>
    <property type="match status" value="1"/>
</dbReference>
<dbReference type="FunFam" id="1.20.810.10:FF:000002">
    <property type="entry name" value="Cytochrome b"/>
    <property type="match status" value="1"/>
</dbReference>
<dbReference type="Gene3D" id="1.20.810.10">
    <property type="entry name" value="Cytochrome Bc1 Complex, Chain C"/>
    <property type="match status" value="1"/>
</dbReference>
<dbReference type="InterPro" id="IPR005798">
    <property type="entry name" value="Cyt_b/b6_C"/>
</dbReference>
<dbReference type="InterPro" id="IPR036150">
    <property type="entry name" value="Cyt_b/b6_C_sf"/>
</dbReference>
<dbReference type="InterPro" id="IPR005797">
    <property type="entry name" value="Cyt_b/b6_N"/>
</dbReference>
<dbReference type="InterPro" id="IPR027387">
    <property type="entry name" value="Cytb/b6-like_sf"/>
</dbReference>
<dbReference type="InterPro" id="IPR030689">
    <property type="entry name" value="Cytochrome_b"/>
</dbReference>
<dbReference type="InterPro" id="IPR048260">
    <property type="entry name" value="Cytochrome_b_C_euk/bac"/>
</dbReference>
<dbReference type="InterPro" id="IPR048259">
    <property type="entry name" value="Cytochrome_b_N_euk/bac"/>
</dbReference>
<dbReference type="InterPro" id="IPR016174">
    <property type="entry name" value="Di-haem_cyt_TM"/>
</dbReference>
<dbReference type="PANTHER" id="PTHR19271">
    <property type="entry name" value="CYTOCHROME B"/>
    <property type="match status" value="1"/>
</dbReference>
<dbReference type="PANTHER" id="PTHR19271:SF16">
    <property type="entry name" value="CYTOCHROME B"/>
    <property type="match status" value="1"/>
</dbReference>
<dbReference type="Pfam" id="PF00032">
    <property type="entry name" value="Cytochrom_B_C"/>
    <property type="match status" value="1"/>
</dbReference>
<dbReference type="Pfam" id="PF00033">
    <property type="entry name" value="Cytochrome_B"/>
    <property type="match status" value="1"/>
</dbReference>
<dbReference type="PIRSF" id="PIRSF038885">
    <property type="entry name" value="COB"/>
    <property type="match status" value="1"/>
</dbReference>
<dbReference type="SUPFAM" id="SSF81648">
    <property type="entry name" value="a domain/subunit of cytochrome bc1 complex (Ubiquinol-cytochrome c reductase)"/>
    <property type="match status" value="1"/>
</dbReference>
<dbReference type="SUPFAM" id="SSF81342">
    <property type="entry name" value="Transmembrane di-heme cytochromes"/>
    <property type="match status" value="1"/>
</dbReference>
<dbReference type="PROSITE" id="PS51003">
    <property type="entry name" value="CYTB_CTER"/>
    <property type="match status" value="1"/>
</dbReference>
<dbReference type="PROSITE" id="PS51002">
    <property type="entry name" value="CYTB_NTER"/>
    <property type="match status" value="1"/>
</dbReference>
<feature type="chain" id="PRO_0000061008" description="Cytochrome b">
    <location>
        <begin position="1"/>
        <end position="379"/>
    </location>
</feature>
<feature type="transmembrane region" description="Helical" evidence="2">
    <location>
        <begin position="33"/>
        <end position="53"/>
    </location>
</feature>
<feature type="transmembrane region" description="Helical" evidence="2">
    <location>
        <begin position="77"/>
        <end position="98"/>
    </location>
</feature>
<feature type="transmembrane region" description="Helical" evidence="2">
    <location>
        <begin position="113"/>
        <end position="133"/>
    </location>
</feature>
<feature type="transmembrane region" description="Helical" evidence="2">
    <location>
        <begin position="178"/>
        <end position="198"/>
    </location>
</feature>
<feature type="transmembrane region" description="Helical" evidence="2">
    <location>
        <begin position="226"/>
        <end position="246"/>
    </location>
</feature>
<feature type="transmembrane region" description="Helical" evidence="2">
    <location>
        <begin position="288"/>
        <end position="308"/>
    </location>
</feature>
<feature type="transmembrane region" description="Helical" evidence="2">
    <location>
        <begin position="320"/>
        <end position="340"/>
    </location>
</feature>
<feature type="transmembrane region" description="Helical" evidence="2">
    <location>
        <begin position="347"/>
        <end position="367"/>
    </location>
</feature>
<feature type="binding site" description="axial binding residue" evidence="2">
    <location>
        <position position="83"/>
    </location>
    <ligand>
        <name>heme b</name>
        <dbReference type="ChEBI" id="CHEBI:60344"/>
        <label>b562</label>
    </ligand>
    <ligandPart>
        <name>Fe</name>
        <dbReference type="ChEBI" id="CHEBI:18248"/>
    </ligandPart>
</feature>
<feature type="binding site" description="axial binding residue" evidence="2">
    <location>
        <position position="97"/>
    </location>
    <ligand>
        <name>heme b</name>
        <dbReference type="ChEBI" id="CHEBI:60344"/>
        <label>b566</label>
    </ligand>
    <ligandPart>
        <name>Fe</name>
        <dbReference type="ChEBI" id="CHEBI:18248"/>
    </ligandPart>
</feature>
<feature type="binding site" description="axial binding residue" evidence="2">
    <location>
        <position position="182"/>
    </location>
    <ligand>
        <name>heme b</name>
        <dbReference type="ChEBI" id="CHEBI:60344"/>
        <label>b562</label>
    </ligand>
    <ligandPart>
        <name>Fe</name>
        <dbReference type="ChEBI" id="CHEBI:18248"/>
    </ligandPart>
</feature>
<feature type="binding site" description="axial binding residue" evidence="2">
    <location>
        <position position="196"/>
    </location>
    <ligand>
        <name>heme b</name>
        <dbReference type="ChEBI" id="CHEBI:60344"/>
        <label>b566</label>
    </ligand>
    <ligandPart>
        <name>Fe</name>
        <dbReference type="ChEBI" id="CHEBI:18248"/>
    </ligandPart>
</feature>
<feature type="binding site" evidence="2">
    <location>
        <position position="201"/>
    </location>
    <ligand>
        <name>a ubiquinone</name>
        <dbReference type="ChEBI" id="CHEBI:16389"/>
    </ligand>
</feature>
<feature type="sequence variant" description="In strain: Isolate FMNH 128675 and Isolate FMNH 128718.">
    <original>V</original>
    <variation>I</variation>
    <location>
        <position position="14"/>
    </location>
</feature>
<feature type="sequence variant" description="In strain: Isolate FMNH 128713, Isolate TK 4728, Isolate TK 86578 and Isolate TK 86579.">
    <original>A</original>
    <variation>T</variation>
    <location>
        <position position="23"/>
    </location>
</feature>
<feature type="sequence variant" description="In strain: Isolate TK 9251 and Isolate TK 11040.">
    <original>S</original>
    <variation>N</variation>
    <location>
        <position position="26"/>
    </location>
</feature>
<feature type="sequence variant" description="In strain: Isolate MVZ 185575.">
    <original>V</original>
    <variation>A</variation>
    <location>
        <position position="39"/>
    </location>
</feature>
<feature type="sequence variant" description="In strain: Isolate FMNH 128718.">
    <original>V</original>
    <variation>M</variation>
    <location>
        <position position="39"/>
    </location>
</feature>
<feature type="sequence variant" description="In strain: Isolate TK 4728 and Isolate TK 9251.">
    <original>V</original>
    <variation>M</variation>
    <location>
        <position position="78"/>
    </location>
</feature>
<feature type="sequence variant" description="In strain: Isolate FMNH 128676, Isolate FMNH 128713, Isolate FMNH 128718 and Isolate TK 43208." evidence="5">
    <original>T</original>
    <variation>M</variation>
    <location>
        <position position="108"/>
    </location>
</feature>
<feature type="sequence variant" description="In strain: Isolate TK 4728.">
    <original>S</original>
    <variation>L</variation>
    <location>
        <position position="110"/>
    </location>
</feature>
<feature type="sequence variant" description="In strain: Isolate TK 13173.">
    <original>L</original>
    <variation>M</variation>
    <location>
        <position position="119"/>
    </location>
</feature>
<feature type="sequence variant" description="In strain: Isolate MVZ 185583.">
    <original>F</original>
    <variation>L</variation>
    <location>
        <position position="121"/>
    </location>
</feature>
<feature type="sequence variant" description="In strain: Isolate TK 15194.">
    <original>V</original>
    <variation>D</variation>
    <location>
        <position position="132"/>
    </location>
</feature>
<feature type="sequence variant" description="In strain: Isolate MVZ 185566.">
    <original>V</original>
    <variation>I</variation>
    <location>
        <position position="132"/>
    </location>
</feature>
<feature type="sequence variant" description="In strain: Isolate TK 15194.">
    <original>I</original>
    <variation>N</variation>
    <location>
        <position position="156"/>
    </location>
</feature>
<feature type="sequence variant" description="In strain: Isolate FMNH 128676, Isolate FMNH 128713, Isolate FMNH 128718, Isolate MVZ 185583, Isolate TK 4728, Isolate TK 9251, Isolate TK 11040, Isolate TK 13173, Isolate TK 13594, Isolate TK 14159, Isolate TK 34707, Isolate TK 41573, Isolate TK 43138, Isolate TK 43178, Isolate TK 43189, Isolate TK 43208, Isolate USNM578997, Isolate USNM579009 and Isolate USNM579010." evidence="5">
    <original>T</original>
    <variation>M</variation>
    <location>
        <position position="158"/>
    </location>
</feature>
<feature type="sequence variant" description="In strain: Isolate TK 22631.">
    <original>Q</original>
    <variation>H</variation>
    <location>
        <position position="162"/>
    </location>
</feature>
<feature type="sequence variant" description="In strain: Isolate TK 15194.">
    <original>T</original>
    <variation>K</variation>
    <location>
        <position position="176"/>
    </location>
</feature>
<feature type="sequence variant" description="In strain: Isolate TK 4728 and Isolate TK 86578.">
    <original>F</original>
    <variation>L</variation>
    <location>
        <position position="185"/>
    </location>
</feature>
<feature type="sequence variant" description="In strain: Isolate TK 41573, Isolate TK 86578, Isolate USNM578997, Isolate USNM579009 and Isolate USNM579010.">
    <original>S</original>
    <variation>P</variation>
    <location>
        <position position="215"/>
    </location>
</feature>
<feature type="sequence variant" description="In strain: Isolate FMNH 128676.">
    <original>L</original>
    <variation>P</variation>
    <location>
        <position position="236"/>
    </location>
</feature>
<feature type="sequence variant" description="In strain: Isolate TK 41573.">
    <original>L</original>
    <variation>I</variation>
    <location>
        <position position="249"/>
    </location>
</feature>
<feature type="sequence variant" description="In strain: Isolate FMNH 128676.">
    <original>M</original>
    <variation>V</variation>
    <location>
        <position position="257"/>
    </location>
</feature>
<feature type="sequence variant" description="In strain: Isolate TK 15194.">
    <original>Y</original>
    <variation>F</variation>
    <location>
        <position position="273"/>
    </location>
</feature>
<feature type="sequence variant" description="In strain: Isolate TK 15194, Isolate TK 22602, Isolate TK 22631, Isolate TK 25071, Isolate TK 56869, Isolate USNM578997, Isolate USNM579009 and Isolate USNM579010.">
    <original>I</original>
    <variation>V</variation>
    <location>
        <position position="303"/>
    </location>
</feature>
<feature type="sequence variant" description="In strain: Isolate FMNH 128676.">
    <original>I</original>
    <variation>F</variation>
    <location>
        <position position="331"/>
    </location>
</feature>
<feature type="sequence variant" description="In strain: Isolate FMNH 128718.">
    <original>I</original>
    <variation>V</variation>
    <location>
        <position position="338"/>
    </location>
</feature>
<feature type="sequence variant" description="In strain: Isolate TK 15154, Isolate TK 15194, Isolate TK 17544, Isolate TK 25071 and Isolate TK 25212.">
    <original>V</original>
    <variation>I</variation>
    <location>
        <position position="356"/>
    </location>
</feature>
<feature type="sequence variant" description="In strain: Isolate TK 86578.">
    <original>L</original>
    <variation>S</variation>
    <location>
        <position position="360"/>
    </location>
</feature>
<feature type="sequence variant" description="In strain: Isolate FMNH 128676.">
    <original>IL</original>
    <variation>TQ</variation>
    <location>
        <begin position="362"/>
        <end position="363"/>
    </location>
</feature>
<feature type="sequence variant" description="In strain: Isolate TK 17544.">
    <original>V</original>
    <variation>I</variation>
    <location>
        <position position="364"/>
    </location>
</feature>
<feature type="sequence variant" description="In strain: Isolate TK 43189.">
    <original>V</original>
    <variation>I</variation>
    <location>
        <position position="369"/>
    </location>
</feature>
<feature type="sequence variant" description="In strain: Isolate FMNH 128676, Isolate FMNH 128713, Isolate FMNH 128718, Isolate TK 4728, Isolate TK 9251, Isolate TK 11040, Isolate TK 13173, Isolate TK 13594, Isolate TK 14159, Isolate TK 34707, Isolate TK 41573, Isolate TK 43138, Isolate TK 43178, Isolate TK 43189, Isolate TK 43208, Isolate USNM578997, Isolate USNM579009 and Isolate USNM579010.">
    <original>Y</original>
    <variation>H</variation>
    <location>
        <position position="375"/>
    </location>
</feature>
<feature type="sequence conflict" description="In Ref. 2; AAA17767." evidence="6" ref="2">
    <original>W</original>
    <variation>C</variation>
    <location>
        <position position="135"/>
    </location>
</feature>
<feature type="sequence conflict" description="In Ref. 2; AAA17767." evidence="6" ref="2">
    <original>FS</original>
    <variation>SL</variation>
    <location>
        <begin position="168"/>
        <end position="169"/>
    </location>
</feature>
<proteinExistence type="inferred from homology"/>
<evidence type="ECO:0000250" key="1"/>
<evidence type="ECO:0000250" key="2">
    <source>
        <dbReference type="UniProtKB" id="P00157"/>
    </source>
</evidence>
<evidence type="ECO:0000255" key="3">
    <source>
        <dbReference type="PROSITE-ProRule" id="PRU00967"/>
    </source>
</evidence>
<evidence type="ECO:0000255" key="4">
    <source>
        <dbReference type="PROSITE-ProRule" id="PRU00968"/>
    </source>
</evidence>
<evidence type="ECO:0000269" key="5">
    <source ref="2"/>
</evidence>
<evidence type="ECO:0000305" key="6"/>
<accession>Q33487</accession>
<accession>Q8W7N1</accession>
<accession>Q8W816</accession>
<accession>Q8W8G0</accession>
<accession>Q8W8H9</accession>
<accession>Q8W901</accession>
<accession>Q8WGH2</accession>
<accession>Q8WGH3</accession>
<accession>Q8WGH4</accession>
<accession>Q8WGH5</accession>
<accession>Q8WGH6</accession>
<accession>Q8WGH7</accession>
<accession>Q8WGH8</accession>
<accession>Q8WGH9</accession>
<accession>Q8WGI0</accession>
<accession>Q8WGI1</accession>
<accession>Q8WGI2</accession>
<accession>Q8WGI3</accession>
<accession>Q8WGI4</accession>
<accession>Q8WGI5</accession>
<accession>Q8WGI6</accession>
<accession>Q8WGI7</accession>
<accession>Q8WGI8</accession>
<accession>Q8WGI9</accession>
<accession>Q8WGJ0</accession>
<accession>Q8WGJ1</accession>
<organism>
    <name type="scientific">Glossophaga soricina</name>
    <name type="common">Pallas' long-tongued bat</name>
    <name type="synonym">Vespertilio soricinus</name>
    <dbReference type="NCBI Taxonomy" id="27638"/>
    <lineage>
        <taxon>Eukaryota</taxon>
        <taxon>Metazoa</taxon>
        <taxon>Chordata</taxon>
        <taxon>Craniata</taxon>
        <taxon>Vertebrata</taxon>
        <taxon>Euteleostomi</taxon>
        <taxon>Mammalia</taxon>
        <taxon>Eutheria</taxon>
        <taxon>Laurasiatheria</taxon>
        <taxon>Chiroptera</taxon>
        <taxon>Yangochiroptera</taxon>
        <taxon>Phyllostomidae</taxon>
        <taxon>Glossophaginae</taxon>
        <taxon>Glossophaga</taxon>
    </lineage>
</organism>
<comment type="function">
    <text evidence="2">Component of the ubiquinol-cytochrome c reductase complex (complex III or cytochrome b-c1 complex) that is part of the mitochondrial respiratory chain. The b-c1 complex mediates electron transfer from ubiquinol to cytochrome c. Contributes to the generation of a proton gradient across the mitochondrial membrane that is then used for ATP synthesis.</text>
</comment>
<comment type="cofactor">
    <cofactor evidence="2">
        <name>heme b</name>
        <dbReference type="ChEBI" id="CHEBI:60344"/>
    </cofactor>
    <text evidence="2">Binds 2 heme b groups non-covalently.</text>
</comment>
<comment type="subunit">
    <text evidence="2">The cytochrome bc1 complex contains 11 subunits: 3 respiratory subunits (MT-CYB, CYC1 and UQCRFS1), 2 core proteins (UQCRC1 and UQCRC2) and 6 low-molecular weight proteins (UQCRH/QCR6, UQCRB/QCR7, UQCRQ/QCR8, UQCR10/QCR9, UQCR11/QCR10 and a cleavage product of UQCRFS1). This cytochrome bc1 complex then forms a dimer.</text>
</comment>
<comment type="subcellular location">
    <subcellularLocation>
        <location evidence="2">Mitochondrion inner membrane</location>
        <topology evidence="2">Multi-pass membrane protein</topology>
    </subcellularLocation>
</comment>
<comment type="miscellaneous">
    <text evidence="1">Heme 1 (or BL or b562) is low-potential and absorbs at about 562 nm, and heme 2 (or BH or b566) is high-potential and absorbs at about 566 nm.</text>
</comment>
<comment type="similarity">
    <text evidence="3 4">Belongs to the cytochrome b family.</text>
</comment>
<comment type="caution">
    <text evidence="2">The full-length protein contains only eight transmembrane helices, not nine as predicted by bioinformatics tools.</text>
</comment>
<gene>
    <name type="primary">MT-CYB</name>
    <name type="synonym">COB</name>
    <name type="synonym">CYTB</name>
    <name type="synonym">MTCYB</name>
</gene>
<reference key="1">
    <citation type="journal article" date="2001" name="J. Mammal.">
        <title>Systematics of bats of the genus Glossophaga (Chiroptera: Phyllostomidae) and phylogeography in G. soricina based on the cytochrome b gene.</title>
        <authorList>
            <person name="Hoffmann F.G."/>
            <person name="Baker R.J."/>
        </authorList>
    </citation>
    <scope>NUCLEOTIDE SEQUENCE [GENOMIC DNA]</scope>
</reference>
<reference key="2">
    <citation type="journal article" date="1994" name="J. Mammal.">
        <title>Familial affinity of Tomopeas ravus (Chiroptera) based on protein electrophoretic and cytochrome b sequence data.</title>
        <authorList>
            <person name="Sudman P.D."/>
            <person name="Barkley L.J."/>
            <person name="Hafner M.S."/>
        </authorList>
    </citation>
    <scope>NUCLEOTIDE SEQUENCE [GENOMIC DNA] OF 1-176</scope>
    <scope>VARIANTS MET-108 AND MET-158</scope>
    <source>
        <strain>Isolate LSUMZ 27407</strain>
        <tissue>Kidney</tissue>
        <tissue>Liver</tissue>
    </source>
</reference>
<geneLocation type="mitochondrion"/>
<protein>
    <recommendedName>
        <fullName>Cytochrome b</fullName>
    </recommendedName>
    <alternativeName>
        <fullName>Complex III subunit 3</fullName>
    </alternativeName>
    <alternativeName>
        <fullName>Complex III subunit III</fullName>
    </alternativeName>
    <alternativeName>
        <fullName>Cytochrome b-c1 complex subunit 3</fullName>
    </alternativeName>
    <alternativeName>
        <fullName>Ubiquinol-cytochrome-c reductase complex cytochrome b subunit</fullName>
    </alternativeName>
</protein>
<name>CYB_GLOSR</name>